<sequence length="496" mass="53823">MSTSTQNIPWYRHLNRAQWRAFSAAWLGYLLDGFDFVLIALVLTEVQSEFGLTTVQAASLISAAFISRWFGGLLLGAMGDRYGRRLAMVSSIILFSVGTLACGFAPGYTTMFIARLVIGMGMAGEYGSSATYVIESWPKHLRNKASGFLISGFSVGAVVAAQVYSLVVPVWGWRALFFIGILPIIFALWLRKNIPEAEDWKEKHEGKAPVRTMVDILYRGEHRIINILMTFAAAAALWFCFAGNLQNAAIVAALGLLCAVIFISFMVQSSGKRWPTGVMLMLVVLFAFLYSWPIQALLPTYLKTELAYDPHTVANVLFFSGFGAAVGCCVGGFLGDWLGTRKAYVCSLLASQILIIPVFAIGGTNVWVLGLLLFFQQMLGQGIAGILPKLIGGYFDTDQRAAGLGFTYNVGALGGALAPILGALIAQRLDLGTALASLSFSLTFVVILLIGLDMPSRVQRWLRPEALRTHDAIDDKPFSGAVPFGSSKDAFVKTKS</sequence>
<organism>
    <name type="scientific">Salmonella arizonae (strain ATCC BAA-731 / CDC346-86 / RSK2980)</name>
    <dbReference type="NCBI Taxonomy" id="41514"/>
    <lineage>
        <taxon>Bacteria</taxon>
        <taxon>Pseudomonadati</taxon>
        <taxon>Pseudomonadota</taxon>
        <taxon>Gammaproteobacteria</taxon>
        <taxon>Enterobacterales</taxon>
        <taxon>Enterobacteriaceae</taxon>
        <taxon>Salmonella</taxon>
    </lineage>
</organism>
<comment type="function">
    <text evidence="1">Catalyzes the proton-dependent transport of sialic acid.</text>
</comment>
<comment type="catalytic activity">
    <reaction evidence="1">
        <text>N-acetylneuraminate(in) + H(+)(in) = N-acetylneuraminate(out) + H(+)(out)</text>
        <dbReference type="Rhea" id="RHEA:28987"/>
        <dbReference type="ChEBI" id="CHEBI:15378"/>
        <dbReference type="ChEBI" id="CHEBI:35418"/>
    </reaction>
</comment>
<comment type="subcellular location">
    <subcellularLocation>
        <location evidence="1">Cell inner membrane</location>
        <topology evidence="1">Multi-pass membrane protein</topology>
    </subcellularLocation>
</comment>
<comment type="similarity">
    <text evidence="1">Belongs to the major facilitator superfamily. Sialate:H(+) symporter (SHS) (TC 2.A.1.12) family.</text>
</comment>
<protein>
    <recommendedName>
        <fullName evidence="1">Sialic acid transporter NanT</fullName>
    </recommendedName>
    <alternativeName>
        <fullName evidence="1">Sialic acid permease</fullName>
    </alternativeName>
    <alternativeName>
        <fullName evidence="1">Sialic acid/H(+) symporter</fullName>
    </alternativeName>
</protein>
<keyword id="KW-0997">Cell inner membrane</keyword>
<keyword id="KW-1003">Cell membrane</keyword>
<keyword id="KW-0472">Membrane</keyword>
<keyword id="KW-1185">Reference proteome</keyword>
<keyword id="KW-0762">Sugar transport</keyword>
<keyword id="KW-0812">Transmembrane</keyword>
<keyword id="KW-1133">Transmembrane helix</keyword>
<keyword id="KW-0813">Transport</keyword>
<reference key="1">
    <citation type="submission" date="2007-11" db="EMBL/GenBank/DDBJ databases">
        <authorList>
            <consortium name="The Salmonella enterica serovar Arizonae Genome Sequencing Project"/>
            <person name="McClelland M."/>
            <person name="Sanderson E.K."/>
            <person name="Porwollik S."/>
            <person name="Spieth J."/>
            <person name="Clifton W.S."/>
            <person name="Fulton R."/>
            <person name="Chunyan W."/>
            <person name="Wollam A."/>
            <person name="Shah N."/>
            <person name="Pepin K."/>
            <person name="Bhonagiri V."/>
            <person name="Nash W."/>
            <person name="Johnson M."/>
            <person name="Thiruvilangam P."/>
            <person name="Wilson R."/>
        </authorList>
    </citation>
    <scope>NUCLEOTIDE SEQUENCE [LARGE SCALE GENOMIC DNA]</scope>
    <source>
        <strain>ATCC BAA-731 / CDC346-86 / RSK2980</strain>
    </source>
</reference>
<feature type="chain" id="PRO_1000214056" description="Sialic acid transporter NanT">
    <location>
        <begin position="1"/>
        <end position="496"/>
    </location>
</feature>
<feature type="transmembrane region" description="Helical" evidence="1">
    <location>
        <begin position="22"/>
        <end position="42"/>
    </location>
</feature>
<feature type="transmembrane region" description="Helical" evidence="1">
    <location>
        <begin position="58"/>
        <end position="78"/>
    </location>
</feature>
<feature type="transmembrane region" description="Helical" evidence="1">
    <location>
        <begin position="86"/>
        <end position="106"/>
    </location>
</feature>
<feature type="transmembrane region" description="Helical" evidence="1">
    <location>
        <begin position="116"/>
        <end position="136"/>
    </location>
</feature>
<feature type="transmembrane region" description="Helical" evidence="1">
    <location>
        <begin position="148"/>
        <end position="168"/>
    </location>
</feature>
<feature type="transmembrane region" description="Helical" evidence="1">
    <location>
        <begin position="170"/>
        <end position="190"/>
    </location>
</feature>
<feature type="transmembrane region" description="Helical" evidence="1">
    <location>
        <begin position="224"/>
        <end position="244"/>
    </location>
</feature>
<feature type="transmembrane region" description="Helical" evidence="1">
    <location>
        <begin position="247"/>
        <end position="267"/>
    </location>
</feature>
<feature type="transmembrane region" description="Helical" evidence="1">
    <location>
        <begin position="278"/>
        <end position="298"/>
    </location>
</feature>
<feature type="transmembrane region" description="Helical" evidence="1">
    <location>
        <begin position="313"/>
        <end position="333"/>
    </location>
</feature>
<feature type="transmembrane region" description="Helical" evidence="1">
    <location>
        <begin position="353"/>
        <end position="373"/>
    </location>
</feature>
<feature type="transmembrane region" description="Helical" evidence="1">
    <location>
        <begin position="374"/>
        <end position="394"/>
    </location>
</feature>
<feature type="transmembrane region" description="Helical" evidence="1">
    <location>
        <begin position="406"/>
        <end position="426"/>
    </location>
</feature>
<feature type="transmembrane region" description="Helical" evidence="1">
    <location>
        <begin position="431"/>
        <end position="451"/>
    </location>
</feature>
<gene>
    <name evidence="1" type="primary">nanT</name>
    <name type="ordered locus">SARI_04286</name>
</gene>
<name>NANT_SALAR</name>
<proteinExistence type="inferred from homology"/>
<accession>A9MNY7</accession>
<evidence type="ECO:0000255" key="1">
    <source>
        <dbReference type="HAMAP-Rule" id="MF_01238"/>
    </source>
</evidence>
<dbReference type="EMBL" id="CP000880">
    <property type="protein sequence ID" value="ABX24069.1"/>
    <property type="molecule type" value="Genomic_DNA"/>
</dbReference>
<dbReference type="SMR" id="A9MNY7"/>
<dbReference type="STRING" id="41514.SARI_04286"/>
<dbReference type="KEGG" id="ses:SARI_04286"/>
<dbReference type="HOGENOM" id="CLU_001265_46_8_6"/>
<dbReference type="Proteomes" id="UP000002084">
    <property type="component" value="Chromosome"/>
</dbReference>
<dbReference type="GO" id="GO:0005886">
    <property type="term" value="C:plasma membrane"/>
    <property type="evidence" value="ECO:0007669"/>
    <property type="project" value="UniProtKB-SubCell"/>
</dbReference>
<dbReference type="GO" id="GO:0046943">
    <property type="term" value="F:carboxylic acid transmembrane transporter activity"/>
    <property type="evidence" value="ECO:0007669"/>
    <property type="project" value="TreeGrafter"/>
</dbReference>
<dbReference type="GO" id="GO:0015538">
    <property type="term" value="F:sialic acid:proton symporter activity"/>
    <property type="evidence" value="ECO:0007669"/>
    <property type="project" value="UniProtKB-UniRule"/>
</dbReference>
<dbReference type="CDD" id="cd17316">
    <property type="entry name" value="MFS_SV2_like"/>
    <property type="match status" value="1"/>
</dbReference>
<dbReference type="FunFam" id="1.20.1250.20:FF:000027">
    <property type="entry name" value="Sialic acid transporter NanT"/>
    <property type="match status" value="1"/>
</dbReference>
<dbReference type="FunFam" id="1.20.1250.20:FF:000038">
    <property type="entry name" value="Sialic acid transporter NanT"/>
    <property type="match status" value="1"/>
</dbReference>
<dbReference type="Gene3D" id="1.20.1250.20">
    <property type="entry name" value="MFS general substrate transporter like domains"/>
    <property type="match status" value="2"/>
</dbReference>
<dbReference type="HAMAP" id="MF_01238">
    <property type="entry name" value="MFS_NanT"/>
    <property type="match status" value="1"/>
</dbReference>
<dbReference type="InterPro" id="IPR011701">
    <property type="entry name" value="MFS"/>
</dbReference>
<dbReference type="InterPro" id="IPR020846">
    <property type="entry name" value="MFS_dom"/>
</dbReference>
<dbReference type="InterPro" id="IPR036259">
    <property type="entry name" value="MFS_trans_sf"/>
</dbReference>
<dbReference type="InterPro" id="IPR004742">
    <property type="entry name" value="SA_transporter"/>
</dbReference>
<dbReference type="NCBIfam" id="TIGR00891">
    <property type="entry name" value="2A0112"/>
    <property type="match status" value="1"/>
</dbReference>
<dbReference type="NCBIfam" id="NF003024">
    <property type="entry name" value="PRK03893.1"/>
    <property type="match status" value="1"/>
</dbReference>
<dbReference type="PANTHER" id="PTHR23508">
    <property type="entry name" value="CARBOXYLIC ACID TRANSPORTER PROTEIN HOMOLOG"/>
    <property type="match status" value="1"/>
</dbReference>
<dbReference type="PANTHER" id="PTHR23508:SF3">
    <property type="entry name" value="SIALIC ACID TRANSPORTER NANT"/>
    <property type="match status" value="1"/>
</dbReference>
<dbReference type="Pfam" id="PF07690">
    <property type="entry name" value="MFS_1"/>
    <property type="match status" value="1"/>
</dbReference>
<dbReference type="SUPFAM" id="SSF103473">
    <property type="entry name" value="MFS general substrate transporter"/>
    <property type="match status" value="1"/>
</dbReference>
<dbReference type="PROSITE" id="PS50850">
    <property type="entry name" value="MFS"/>
    <property type="match status" value="1"/>
</dbReference>